<sequence>MEVKPLANIKSAIKRAELNVKQNEKNSAQKSAMRTAIKAFEANPSEELFRAASSAIDKAETKGLIHKNKASRDKARLASKLA</sequence>
<protein>
    <recommendedName>
        <fullName evidence="1">Small ribosomal subunit protein bS20</fullName>
    </recommendedName>
    <alternativeName>
        <fullName evidence="2">30S ribosomal protein S20</fullName>
    </alternativeName>
</protein>
<proteinExistence type="inferred from homology"/>
<organism>
    <name type="scientific">Streptococcus suis (strain 98HAH33)</name>
    <dbReference type="NCBI Taxonomy" id="391296"/>
    <lineage>
        <taxon>Bacteria</taxon>
        <taxon>Bacillati</taxon>
        <taxon>Bacillota</taxon>
        <taxon>Bacilli</taxon>
        <taxon>Lactobacillales</taxon>
        <taxon>Streptococcaceae</taxon>
        <taxon>Streptococcus</taxon>
    </lineage>
</organism>
<dbReference type="EMBL" id="CP000408">
    <property type="protein sequence ID" value="ABP92258.1"/>
    <property type="molecule type" value="Genomic_DNA"/>
</dbReference>
<dbReference type="SMR" id="A4W1L9"/>
<dbReference type="KEGG" id="ssv:SSU98_1100"/>
<dbReference type="HOGENOM" id="CLU_160655_1_1_9"/>
<dbReference type="GO" id="GO:0005829">
    <property type="term" value="C:cytosol"/>
    <property type="evidence" value="ECO:0007669"/>
    <property type="project" value="TreeGrafter"/>
</dbReference>
<dbReference type="GO" id="GO:0015935">
    <property type="term" value="C:small ribosomal subunit"/>
    <property type="evidence" value="ECO:0007669"/>
    <property type="project" value="TreeGrafter"/>
</dbReference>
<dbReference type="GO" id="GO:0070181">
    <property type="term" value="F:small ribosomal subunit rRNA binding"/>
    <property type="evidence" value="ECO:0007669"/>
    <property type="project" value="TreeGrafter"/>
</dbReference>
<dbReference type="GO" id="GO:0003735">
    <property type="term" value="F:structural constituent of ribosome"/>
    <property type="evidence" value="ECO:0007669"/>
    <property type="project" value="InterPro"/>
</dbReference>
<dbReference type="GO" id="GO:0006412">
    <property type="term" value="P:translation"/>
    <property type="evidence" value="ECO:0007669"/>
    <property type="project" value="UniProtKB-UniRule"/>
</dbReference>
<dbReference type="FunFam" id="1.20.58.110:FF:000001">
    <property type="entry name" value="30S ribosomal protein S20"/>
    <property type="match status" value="1"/>
</dbReference>
<dbReference type="Gene3D" id="1.20.58.110">
    <property type="entry name" value="Ribosomal protein S20"/>
    <property type="match status" value="1"/>
</dbReference>
<dbReference type="HAMAP" id="MF_00500">
    <property type="entry name" value="Ribosomal_bS20"/>
    <property type="match status" value="1"/>
</dbReference>
<dbReference type="InterPro" id="IPR002583">
    <property type="entry name" value="Ribosomal_bS20"/>
</dbReference>
<dbReference type="InterPro" id="IPR036510">
    <property type="entry name" value="Ribosomal_bS20_sf"/>
</dbReference>
<dbReference type="NCBIfam" id="TIGR00029">
    <property type="entry name" value="S20"/>
    <property type="match status" value="1"/>
</dbReference>
<dbReference type="PANTHER" id="PTHR33398">
    <property type="entry name" value="30S RIBOSOMAL PROTEIN S20"/>
    <property type="match status" value="1"/>
</dbReference>
<dbReference type="PANTHER" id="PTHR33398:SF1">
    <property type="entry name" value="SMALL RIBOSOMAL SUBUNIT PROTEIN BS20C"/>
    <property type="match status" value="1"/>
</dbReference>
<dbReference type="Pfam" id="PF01649">
    <property type="entry name" value="Ribosomal_S20p"/>
    <property type="match status" value="1"/>
</dbReference>
<dbReference type="SUPFAM" id="SSF46992">
    <property type="entry name" value="Ribosomal protein S20"/>
    <property type="match status" value="1"/>
</dbReference>
<comment type="function">
    <text evidence="1">Binds directly to 16S ribosomal RNA.</text>
</comment>
<comment type="similarity">
    <text evidence="1">Belongs to the bacterial ribosomal protein bS20 family.</text>
</comment>
<feature type="chain" id="PRO_1000060495" description="Small ribosomal subunit protein bS20">
    <location>
        <begin position="1"/>
        <end position="82"/>
    </location>
</feature>
<gene>
    <name evidence="1" type="primary">rpsT</name>
    <name type="ordered locus">SSU98_1100</name>
</gene>
<evidence type="ECO:0000255" key="1">
    <source>
        <dbReference type="HAMAP-Rule" id="MF_00500"/>
    </source>
</evidence>
<evidence type="ECO:0000305" key="2"/>
<keyword id="KW-0687">Ribonucleoprotein</keyword>
<keyword id="KW-0689">Ribosomal protein</keyword>
<keyword id="KW-0694">RNA-binding</keyword>
<keyword id="KW-0699">rRNA-binding</keyword>
<name>RS20_STRS2</name>
<reference key="1">
    <citation type="journal article" date="2007" name="PLoS ONE">
        <title>A glimpse of streptococcal toxic shock syndrome from comparative genomics of S. suis 2 Chinese isolates.</title>
        <authorList>
            <person name="Chen C."/>
            <person name="Tang J."/>
            <person name="Dong W."/>
            <person name="Wang C."/>
            <person name="Feng Y."/>
            <person name="Wang J."/>
            <person name="Zheng F."/>
            <person name="Pan X."/>
            <person name="Liu D."/>
            <person name="Li M."/>
            <person name="Song Y."/>
            <person name="Zhu X."/>
            <person name="Sun H."/>
            <person name="Feng T."/>
            <person name="Guo Z."/>
            <person name="Ju A."/>
            <person name="Ge J."/>
            <person name="Dong Y."/>
            <person name="Sun W."/>
            <person name="Jiang Y."/>
            <person name="Wang J."/>
            <person name="Yan J."/>
            <person name="Yang H."/>
            <person name="Wang X."/>
            <person name="Gao G.F."/>
            <person name="Yang R."/>
            <person name="Wang J."/>
            <person name="Yu J."/>
        </authorList>
    </citation>
    <scope>NUCLEOTIDE SEQUENCE [LARGE SCALE GENOMIC DNA]</scope>
    <source>
        <strain>98HAH33</strain>
    </source>
</reference>
<accession>A4W1L9</accession>